<feature type="chain" id="PRO_1000082689" description="UDP-N-acetylmuramoylalanine--D-glutamate ligase">
    <location>
        <begin position="1"/>
        <end position="455"/>
    </location>
</feature>
<feature type="binding site" evidence="1">
    <location>
        <begin position="117"/>
        <end position="123"/>
    </location>
    <ligand>
        <name>ATP</name>
        <dbReference type="ChEBI" id="CHEBI:30616"/>
    </ligand>
</feature>
<comment type="function">
    <text evidence="1">Cell wall formation. Catalyzes the addition of glutamate to the nucleotide precursor UDP-N-acetylmuramoyl-L-alanine (UMA).</text>
</comment>
<comment type="catalytic activity">
    <reaction evidence="1">
        <text>UDP-N-acetyl-alpha-D-muramoyl-L-alanine + D-glutamate + ATP = UDP-N-acetyl-alpha-D-muramoyl-L-alanyl-D-glutamate + ADP + phosphate + H(+)</text>
        <dbReference type="Rhea" id="RHEA:16429"/>
        <dbReference type="ChEBI" id="CHEBI:15378"/>
        <dbReference type="ChEBI" id="CHEBI:29986"/>
        <dbReference type="ChEBI" id="CHEBI:30616"/>
        <dbReference type="ChEBI" id="CHEBI:43474"/>
        <dbReference type="ChEBI" id="CHEBI:83898"/>
        <dbReference type="ChEBI" id="CHEBI:83900"/>
        <dbReference type="ChEBI" id="CHEBI:456216"/>
        <dbReference type="EC" id="6.3.2.9"/>
    </reaction>
</comment>
<comment type="pathway">
    <text evidence="1">Cell wall biogenesis; peptidoglycan biosynthesis.</text>
</comment>
<comment type="subcellular location">
    <subcellularLocation>
        <location evidence="1">Cytoplasm</location>
    </subcellularLocation>
</comment>
<comment type="similarity">
    <text evidence="1">Belongs to the MurCDEF family.</text>
</comment>
<reference key="1">
    <citation type="journal article" date="2008" name="Genome Res.">
        <title>The genome of Pelotomaculum thermopropionicum reveals niche-associated evolution in anaerobic microbiota.</title>
        <authorList>
            <person name="Kosaka T."/>
            <person name="Kato S."/>
            <person name="Shimoyama T."/>
            <person name="Ishii S."/>
            <person name="Abe T."/>
            <person name="Watanabe K."/>
        </authorList>
    </citation>
    <scope>NUCLEOTIDE SEQUENCE [LARGE SCALE GENOMIC DNA]</scope>
    <source>
        <strain>DSM 13744 / JCM 10971 / SI</strain>
    </source>
</reference>
<evidence type="ECO:0000255" key="1">
    <source>
        <dbReference type="HAMAP-Rule" id="MF_00639"/>
    </source>
</evidence>
<gene>
    <name evidence="1" type="primary">murD</name>
    <name type="ordered locus">PTH_1863</name>
</gene>
<dbReference type="EC" id="6.3.2.9" evidence="1"/>
<dbReference type="EMBL" id="AP009389">
    <property type="protein sequence ID" value="BAF60044.1"/>
    <property type="molecule type" value="Genomic_DNA"/>
</dbReference>
<dbReference type="SMR" id="A5D147"/>
<dbReference type="STRING" id="370438.PTH_1863"/>
<dbReference type="KEGG" id="pth:PTH_1863"/>
<dbReference type="eggNOG" id="COG0771">
    <property type="taxonomic scope" value="Bacteria"/>
</dbReference>
<dbReference type="HOGENOM" id="CLU_032540_0_0_9"/>
<dbReference type="UniPathway" id="UPA00219"/>
<dbReference type="Proteomes" id="UP000006556">
    <property type="component" value="Chromosome"/>
</dbReference>
<dbReference type="GO" id="GO:0005737">
    <property type="term" value="C:cytoplasm"/>
    <property type="evidence" value="ECO:0007669"/>
    <property type="project" value="UniProtKB-SubCell"/>
</dbReference>
<dbReference type="GO" id="GO:0005524">
    <property type="term" value="F:ATP binding"/>
    <property type="evidence" value="ECO:0007669"/>
    <property type="project" value="UniProtKB-UniRule"/>
</dbReference>
<dbReference type="GO" id="GO:0008764">
    <property type="term" value="F:UDP-N-acetylmuramoylalanine-D-glutamate ligase activity"/>
    <property type="evidence" value="ECO:0007669"/>
    <property type="project" value="UniProtKB-UniRule"/>
</dbReference>
<dbReference type="GO" id="GO:0051301">
    <property type="term" value="P:cell division"/>
    <property type="evidence" value="ECO:0007669"/>
    <property type="project" value="UniProtKB-KW"/>
</dbReference>
<dbReference type="GO" id="GO:0071555">
    <property type="term" value="P:cell wall organization"/>
    <property type="evidence" value="ECO:0007669"/>
    <property type="project" value="UniProtKB-KW"/>
</dbReference>
<dbReference type="GO" id="GO:0009252">
    <property type="term" value="P:peptidoglycan biosynthetic process"/>
    <property type="evidence" value="ECO:0007669"/>
    <property type="project" value="UniProtKB-UniRule"/>
</dbReference>
<dbReference type="GO" id="GO:0008360">
    <property type="term" value="P:regulation of cell shape"/>
    <property type="evidence" value="ECO:0007669"/>
    <property type="project" value="UniProtKB-KW"/>
</dbReference>
<dbReference type="Gene3D" id="3.90.190.20">
    <property type="entry name" value="Mur ligase, C-terminal domain"/>
    <property type="match status" value="1"/>
</dbReference>
<dbReference type="Gene3D" id="3.40.1190.10">
    <property type="entry name" value="Mur-like, catalytic domain"/>
    <property type="match status" value="1"/>
</dbReference>
<dbReference type="Gene3D" id="3.40.50.720">
    <property type="entry name" value="NAD(P)-binding Rossmann-like Domain"/>
    <property type="match status" value="1"/>
</dbReference>
<dbReference type="HAMAP" id="MF_00639">
    <property type="entry name" value="MurD"/>
    <property type="match status" value="1"/>
</dbReference>
<dbReference type="InterPro" id="IPR036565">
    <property type="entry name" value="Mur-like_cat_sf"/>
</dbReference>
<dbReference type="InterPro" id="IPR004101">
    <property type="entry name" value="Mur_ligase_C"/>
</dbReference>
<dbReference type="InterPro" id="IPR036615">
    <property type="entry name" value="Mur_ligase_C_dom_sf"/>
</dbReference>
<dbReference type="InterPro" id="IPR013221">
    <property type="entry name" value="Mur_ligase_cen"/>
</dbReference>
<dbReference type="InterPro" id="IPR005762">
    <property type="entry name" value="MurD"/>
</dbReference>
<dbReference type="NCBIfam" id="TIGR01087">
    <property type="entry name" value="murD"/>
    <property type="match status" value="1"/>
</dbReference>
<dbReference type="PANTHER" id="PTHR43692">
    <property type="entry name" value="UDP-N-ACETYLMURAMOYLALANINE--D-GLUTAMATE LIGASE"/>
    <property type="match status" value="1"/>
</dbReference>
<dbReference type="PANTHER" id="PTHR43692:SF1">
    <property type="entry name" value="UDP-N-ACETYLMURAMOYLALANINE--D-GLUTAMATE LIGASE"/>
    <property type="match status" value="1"/>
</dbReference>
<dbReference type="Pfam" id="PF02875">
    <property type="entry name" value="Mur_ligase_C"/>
    <property type="match status" value="1"/>
</dbReference>
<dbReference type="Pfam" id="PF08245">
    <property type="entry name" value="Mur_ligase_M"/>
    <property type="match status" value="1"/>
</dbReference>
<dbReference type="Pfam" id="PF21799">
    <property type="entry name" value="MurD-like_N"/>
    <property type="match status" value="1"/>
</dbReference>
<dbReference type="SUPFAM" id="SSF51984">
    <property type="entry name" value="MurCD N-terminal domain"/>
    <property type="match status" value="1"/>
</dbReference>
<dbReference type="SUPFAM" id="SSF53623">
    <property type="entry name" value="MurD-like peptide ligases, catalytic domain"/>
    <property type="match status" value="1"/>
</dbReference>
<dbReference type="SUPFAM" id="SSF53244">
    <property type="entry name" value="MurD-like peptide ligases, peptide-binding domain"/>
    <property type="match status" value="1"/>
</dbReference>
<organism>
    <name type="scientific">Pelotomaculum thermopropionicum (strain DSM 13744 / JCM 10971 / SI)</name>
    <dbReference type="NCBI Taxonomy" id="370438"/>
    <lineage>
        <taxon>Bacteria</taxon>
        <taxon>Bacillati</taxon>
        <taxon>Bacillota</taxon>
        <taxon>Clostridia</taxon>
        <taxon>Eubacteriales</taxon>
        <taxon>Desulfotomaculaceae</taxon>
        <taxon>Pelotomaculum</taxon>
    </lineage>
</organism>
<name>MURD_PELTS</name>
<proteinExistence type="inferred from homology"/>
<sequence>MLKDFTRKKVLVIGAGRSGLAVSRFLVKKGASVVLADAGKPDYPDGELEDLTAAGVELSLGGYPGVGKESVDLVVVSPGVPLTVEPVRAAVREGIPVTGELELAYYFTRSPIVAVTGTNGKTTTTTLIGEIFKDAGMNTLVGGNIGSPLIAEVERYGPDDVIVAEVSSFQLETASTFRPKVGVVLNITPDHLDRHGTMGNYAATKARMFANQGPGDFAVLNCDDPLAASLKAGVRSRVIFFSRRKELKEGVWVSGGMIVASLNGHREVVCRSDELGLPGAHNLENALAAVAAAKAMGIESNSLAGTLRRFKGVAHRLEFVAEVDGVRYINDSKGTNPDAAIKALESYGEPIVLIAGGKNKGSDFREFARKVKEKAKVLVVLGQSAGLIAEAARAEGFENILYADGFREAVLLARRVARPGDIVLLSPACASWDMFKSFEERGDLFKEIVLSLKKG</sequence>
<accession>A5D147</accession>
<protein>
    <recommendedName>
        <fullName evidence="1">UDP-N-acetylmuramoylalanine--D-glutamate ligase</fullName>
        <ecNumber evidence="1">6.3.2.9</ecNumber>
    </recommendedName>
    <alternativeName>
        <fullName evidence="1">D-glutamic acid-adding enzyme</fullName>
    </alternativeName>
    <alternativeName>
        <fullName evidence="1">UDP-N-acetylmuramoyl-L-alanyl-D-glutamate synthetase</fullName>
    </alternativeName>
</protein>
<keyword id="KW-0067">ATP-binding</keyword>
<keyword id="KW-0131">Cell cycle</keyword>
<keyword id="KW-0132">Cell division</keyword>
<keyword id="KW-0133">Cell shape</keyword>
<keyword id="KW-0961">Cell wall biogenesis/degradation</keyword>
<keyword id="KW-0963">Cytoplasm</keyword>
<keyword id="KW-0436">Ligase</keyword>
<keyword id="KW-0547">Nucleotide-binding</keyword>
<keyword id="KW-0573">Peptidoglycan synthesis</keyword>
<keyword id="KW-1185">Reference proteome</keyword>